<feature type="chain" id="PRO_0000114188" description="Chromosomal replication initiator protein DnaA">
    <location>
        <begin position="1"/>
        <end position="457"/>
    </location>
</feature>
<feature type="region of interest" description="Domain I, interacts with DnaA modulators" evidence="10">
    <location>
        <begin position="1"/>
        <end position="90"/>
    </location>
</feature>
<feature type="region of interest" description="Domain II" evidence="10">
    <location>
        <begin position="91"/>
        <end position="112"/>
    </location>
</feature>
<feature type="region of interest" description="Domain III, AAA+ region" evidence="2">
    <location>
        <begin position="113"/>
        <end position="323"/>
    </location>
</feature>
<feature type="region of interest" description="Domain IV, binds dsDNA" evidence="2 9">
    <location>
        <begin position="324"/>
        <end position="457"/>
    </location>
</feature>
<feature type="binding site" evidence="2">
    <location>
        <position position="153"/>
    </location>
    <ligand>
        <name>ATP</name>
        <dbReference type="ChEBI" id="CHEBI:30616"/>
    </ligand>
</feature>
<feature type="binding site" evidence="2">
    <location>
        <position position="155"/>
    </location>
    <ligand>
        <name>ATP</name>
        <dbReference type="ChEBI" id="CHEBI:30616"/>
    </ligand>
</feature>
<feature type="binding site" evidence="2">
    <location>
        <position position="156"/>
    </location>
    <ligand>
        <name>ATP</name>
        <dbReference type="ChEBI" id="CHEBI:30616"/>
    </ligand>
</feature>
<feature type="binding site" evidence="2">
    <location>
        <position position="157"/>
    </location>
    <ligand>
        <name>ATP</name>
        <dbReference type="ChEBI" id="CHEBI:30616"/>
    </ligand>
</feature>
<feature type="mutagenesis site" description="No strand separation in vitro, wild-type ATP binding." evidence="7">
    <original>L</original>
    <variation>A</variation>
    <location>
        <position position="187"/>
    </location>
</feature>
<feature type="mutagenesis site" description="No strand separation in vitro, wild-type ATP binding." evidence="7">
    <original>R</original>
    <variation>A</variation>
    <location>
        <position position="261"/>
    </location>
</feature>
<feature type="helix" evidence="12">
    <location>
        <begin position="7"/>
        <end position="10"/>
    </location>
</feature>
<feature type="helix" evidence="12">
    <location>
        <begin position="11"/>
        <end position="16"/>
    </location>
</feature>
<feature type="helix" evidence="12">
    <location>
        <begin position="23"/>
        <end position="28"/>
    </location>
</feature>
<feature type="helix" evidence="12">
    <location>
        <begin position="30"/>
        <end position="32"/>
    </location>
</feature>
<feature type="strand" evidence="12">
    <location>
        <begin position="37"/>
        <end position="39"/>
    </location>
</feature>
<feature type="strand" evidence="12">
    <location>
        <begin position="42"/>
        <end position="51"/>
    </location>
</feature>
<feature type="helix" evidence="12">
    <location>
        <begin position="52"/>
        <end position="71"/>
    </location>
</feature>
<feature type="strand" evidence="12">
    <location>
        <begin position="84"/>
        <end position="89"/>
    </location>
</feature>
<name>DNAA_HELPY</name>
<sequence length="457" mass="51683">MDTNNNIEKEILALVKQNPKVSLIEYENYFSQLKYNPNASKSDIAFFYAPNQVLCTTITAKYGALLKEILSQNKVGMHLAHSVDVRIEVAPKIQINAQSNINYKAIKTSVKDSYTFENFVVGSCNNTVYEIAKKVAQSDTPPYNPVLFYGGTGLGKTHILNAIGNHALEKHKKVVLVTSEDFLTDFLKHLDNKTMDSFKAKYRHCDFFLLDDAQFLQGKPKLEEEFFHTFNELHANSKQIVLISDRSPKNIAGLEDRLKSRFEWGITAKVMPPDLETKLSIVKQKCQLNQITLPEEVMEYIAQHISDNIRQMEGAIIKISVNANLMNASIDLNLAKTVLEDLQKDHAEGSSLENILLAVAQSLNLKSSEIKVSSRQKNVALARKLVVYFARLYTPNPTLSLAQFLDLKDHSSISKMYSGVKKMLEEEKSPFVLSLREEIKNRLNELNDKKTAFNSSE</sequence>
<keyword id="KW-0002">3D-structure</keyword>
<keyword id="KW-0067">ATP-binding</keyword>
<keyword id="KW-0997">Cell inner membrane</keyword>
<keyword id="KW-1003">Cell membrane</keyword>
<keyword id="KW-0963">Cytoplasm</keyword>
<keyword id="KW-0235">DNA replication</keyword>
<keyword id="KW-0238">DNA-binding</keyword>
<keyword id="KW-0446">Lipid-binding</keyword>
<keyword id="KW-0472">Membrane</keyword>
<keyword id="KW-0547">Nucleotide-binding</keyword>
<keyword id="KW-1185">Reference proteome</keyword>
<comment type="function">
    <text evidence="2">Plays an essential role in the initiation and regulation of chromosomal replication. ATP-DnaA binds to the origin of replication (oriC) to initiate formation of the DNA replication initiation complex once per cell cycle. Binds the DnaA box (a 9 base pair repeat at the origin) and separates the double-stranded (ds)DNA. Forms a right-handed helical filament on oriC DNA; dsDNA binds to the exterior of the filament while single-stranded (ss)DNA is stabiized in the filament's interior. The ATP-DnaA-oriC complex binds and stabilizes one strand of the AT-rich DNA unwinding element (DUE), permitting loading of DNA polymerase. After initiation quickly degrades to an ADP-DnaA complex that is not apt for DNA replication. Binds acidic phospholipids.</text>
</comment>
<comment type="function">
    <text evidence="1 3 4 7">The DnaA box is 5'-TTATC[CA]A[CA]A-3' in this bacterium cycle (PubMed:14643658, PubMed:17645450, PubMed:34197592). Multiple discrete DnaA-oriC complexes can be seen as DnaA levels increase (PubMed:17645450). Binding of DnaA to oriC is increased by HobA; some chi-type structures can be seen by electron microscopy (PubMed:17645450). Strand separation requires the DnaA boxes and adjacent DnaA-trio motifs but works equally well with ADP or ATP (PubMed:34197592).</text>
</comment>
<comment type="subunit">
    <text evidence="2 4 5 6">Oligomerizes as a right-handed, spiral filament on DNA at oriC (By similarity). Interacts via domain I with HobA (PubMed:17645450, PubMed:17683397). In a crystal with domains I and II of DnaA HobA forms tetramers with DnaA fragments bound at the dimer interface of the tetramer (PubMed:19940251).</text>
</comment>
<comment type="interaction">
    <interactant intactId="EBI-527994">
        <id>O26057</id>
    </interactant>
    <interactant intactId="EBI-527984">
        <id>O25828</id>
        <label>HP_1230</label>
    </interactant>
    <organismsDiffer>false</organismsDiffer>
    <experiments>14</experiments>
</comment>
<comment type="subcellular location">
    <subcellularLocation>
        <location evidence="2 3">Cytoplasm</location>
    </subcellularLocation>
    <subcellularLocation>
        <location evidence="3">Cell inner membrane</location>
    </subcellularLocation>
    <text evidence="3 8">About two-thirds of the protein is found associated with the cell inner membrane (PubMed:14643658). Nucleoid-associated protein is probably in the cell inner membrane fraction (Probable).</text>
</comment>
<comment type="domain">
    <text evidence="2 3">Domain I is involved in oligomerization and binding regulators, domain II is flexibile and of varying length in different bacteria, domain III forms the AAA+ region, while domain IV binds dsDNA.</text>
</comment>
<comment type="miscellaneous">
    <text evidence="3">Estimated to be present at about 3000 molecules per cell (in strain P1) (PubMed:14643658).</text>
</comment>
<comment type="similarity">
    <text evidence="2">Belongs to the DnaA family.</text>
</comment>
<protein>
    <recommendedName>
        <fullName evidence="2">Chromosomal replication initiator protein DnaA</fullName>
    </recommendedName>
</protein>
<proteinExistence type="evidence at protein level"/>
<organism>
    <name type="scientific">Helicobacter pylori (strain ATCC 700392 / 26695)</name>
    <name type="common">Campylobacter pylori</name>
    <dbReference type="NCBI Taxonomy" id="85962"/>
    <lineage>
        <taxon>Bacteria</taxon>
        <taxon>Pseudomonadati</taxon>
        <taxon>Campylobacterota</taxon>
        <taxon>Epsilonproteobacteria</taxon>
        <taxon>Campylobacterales</taxon>
        <taxon>Helicobacteraceae</taxon>
        <taxon>Helicobacter</taxon>
    </lineage>
</organism>
<evidence type="ECO:0000250" key="1"/>
<evidence type="ECO:0000255" key="2">
    <source>
        <dbReference type="HAMAP-Rule" id="MF_00377"/>
    </source>
</evidence>
<evidence type="ECO:0000269" key="3">
    <source>
    </source>
</evidence>
<evidence type="ECO:0000269" key="4">
    <source>
    </source>
</evidence>
<evidence type="ECO:0000269" key="5">
    <source>
    </source>
</evidence>
<evidence type="ECO:0000269" key="6">
    <source>
    </source>
</evidence>
<evidence type="ECO:0000269" key="7">
    <source>
    </source>
</evidence>
<evidence type="ECO:0000305" key="8"/>
<evidence type="ECO:0000305" key="9">
    <source>
    </source>
</evidence>
<evidence type="ECO:0000305" key="10">
    <source>
    </source>
</evidence>
<evidence type="ECO:0007744" key="11">
    <source>
        <dbReference type="PDB" id="2WP0"/>
    </source>
</evidence>
<evidence type="ECO:0007829" key="12">
    <source>
        <dbReference type="PDB" id="2WP0"/>
    </source>
</evidence>
<gene>
    <name evidence="2" type="primary">dnaA</name>
    <name type="ordered locus">HP_1529</name>
</gene>
<reference key="1">
    <citation type="journal article" date="1997" name="Nature">
        <title>The complete genome sequence of the gastric pathogen Helicobacter pylori.</title>
        <authorList>
            <person name="Tomb J.-F."/>
            <person name="White O."/>
            <person name="Kerlavage A.R."/>
            <person name="Clayton R.A."/>
            <person name="Sutton G.G."/>
            <person name="Fleischmann R.D."/>
            <person name="Ketchum K.A."/>
            <person name="Klenk H.-P."/>
            <person name="Gill S.R."/>
            <person name="Dougherty B.A."/>
            <person name="Nelson K.E."/>
            <person name="Quackenbush J."/>
            <person name="Zhou L."/>
            <person name="Kirkness E.F."/>
            <person name="Peterson S.N."/>
            <person name="Loftus B.J."/>
            <person name="Richardson D.L."/>
            <person name="Dodson R.J."/>
            <person name="Khalak H.G."/>
            <person name="Glodek A."/>
            <person name="McKenney K."/>
            <person name="FitzGerald L.M."/>
            <person name="Lee N."/>
            <person name="Adams M.D."/>
            <person name="Hickey E.K."/>
            <person name="Berg D.E."/>
            <person name="Gocayne J.D."/>
            <person name="Utterback T.R."/>
            <person name="Peterson J.D."/>
            <person name="Kelley J.M."/>
            <person name="Cotton M.D."/>
            <person name="Weidman J.F."/>
            <person name="Fujii C."/>
            <person name="Bowman C."/>
            <person name="Watthey L."/>
            <person name="Wallin E."/>
            <person name="Hayes W.S."/>
            <person name="Borodovsky M."/>
            <person name="Karp P.D."/>
            <person name="Smith H.O."/>
            <person name="Fraser C.M."/>
            <person name="Venter J.C."/>
        </authorList>
    </citation>
    <scope>NUCLEOTIDE SEQUENCE [LARGE SCALE GENOMIC DNA]</scope>
    <source>
        <strain>ATCC 700392 / 26695</strain>
    </source>
</reference>
<reference key="2">
    <citation type="journal article" date="2003" name="J. Mol. Biol.">
        <title>DNA binding specificity of the replication initiator protein, DnaA from Helicobacter pylori.</title>
        <authorList>
            <person name="Zawilak A."/>
            <person name="Durrant M.C."/>
            <person name="Jakimowicz P."/>
            <person name="Backert S."/>
            <person name="Zakrzewska-Czerwinska J."/>
        </authorList>
    </citation>
    <scope>SUBCELLULAR LOCATION</scope>
    <scope>DOMAIN</scope>
    <scope>PROTEIN ABUNDANCE</scope>
    <scope>DNA-BINDING</scope>
    <source>
        <strain>ATCC 700392 / 26695</strain>
        <strain>P1</strain>
    </source>
</reference>
<reference key="3">
    <citation type="journal article" date="2007" name="Mol. Microbiol.">
        <title>HobA--a novel protein involved in initiation of chromosomal replication in Helicobacter pylori.</title>
        <authorList>
            <person name="Zawilak-Pawlik A."/>
            <person name="Kois A."/>
            <person name="Stingl K."/>
            <person name="Boneca I.G."/>
            <person name="Skrobuk P."/>
            <person name="Piotr J."/>
            <person name="Lurz R."/>
            <person name="Zakrzewska-Czerwinska J."/>
            <person name="Labigne A."/>
        </authorList>
    </citation>
    <scope>FUNCTION</scope>
    <scope>INTERACTION WITH HOBA</scope>
    <scope>DNA-BINDING</scope>
    <source>
        <strain>ATCC 700392 / 26695</strain>
    </source>
</reference>
<reference key="4">
    <citation type="journal article" date="2007" name="Mol. Microbiol.">
        <title>Structural similarity between the DnaA-binding proteins HobA (HP1230) from Helicobacter pylori and DiaA from Escherichia coli.</title>
        <authorList>
            <person name="Natrajan G."/>
            <person name="Hall D.R."/>
            <person name="Thompson A.C."/>
            <person name="Gutsche I."/>
            <person name="Terradot L."/>
        </authorList>
    </citation>
    <scope>INTERACTION WITH HOBA</scope>
</reference>
<reference key="5">
    <citation type="journal article" date="2021" name="Nucleic Acids Res.">
        <title>Evidence for a chromosome origin unwinding system broadly conserved in bacteria.</title>
        <authorList>
            <person name="Pelliciari S."/>
            <person name="Dong M.J."/>
            <person name="Gao F."/>
            <person name="Murray H."/>
        </authorList>
    </citation>
    <scope>FUNCTION</scope>
    <scope>DOMAIN</scope>
    <scope>ATP-BINDING</scope>
    <scope>MUTAGENESIS OF LEU-187 AND ARG-261</scope>
    <source>
        <strain>ATCC 700392 / 26695</strain>
    </source>
</reference>
<reference evidence="11" key="6">
    <citation type="journal article" date="2009" name="Proc. Natl. Acad. Sci. U.S.A.">
        <title>The structure of a DnaA/HobA complex from Helicobacter pylori provides insight into regulation of DNA replication in bacteria.</title>
        <authorList>
            <person name="Natrajan G."/>
            <person name="Noirot-Gros M.F."/>
            <person name="Zawilak-Pawlik A."/>
            <person name="Kapp U."/>
            <person name="Terradot L."/>
        </authorList>
    </citation>
    <scope>X-RAY CRYSTALLOGRAPHY (2.67 ANGSTROMS) OF 1-112 IN COMPLEX WITH HOBA</scope>
    <scope>DOMAIN</scope>
    <source>
        <strain>ATCC 700392 / 26695</strain>
    </source>
</reference>
<dbReference type="EMBL" id="AE000511">
    <property type="protein sequence ID" value="AAD08568.1"/>
    <property type="molecule type" value="Genomic_DNA"/>
</dbReference>
<dbReference type="PIR" id="A64711">
    <property type="entry name" value="A64711"/>
</dbReference>
<dbReference type="RefSeq" id="NP_208319.1">
    <property type="nucleotide sequence ID" value="NC_000915.1"/>
</dbReference>
<dbReference type="RefSeq" id="WP_000380647.1">
    <property type="nucleotide sequence ID" value="NC_018939.1"/>
</dbReference>
<dbReference type="PDB" id="2WP0">
    <property type="method" value="X-ray"/>
    <property type="resolution" value="2.67 A"/>
    <property type="chains" value="C/D=1-112"/>
</dbReference>
<dbReference type="PDBsum" id="2WP0"/>
<dbReference type="SMR" id="O26057"/>
<dbReference type="DIP" id="DIP-3596N"/>
<dbReference type="FunCoup" id="O26057">
    <property type="interactions" value="206"/>
</dbReference>
<dbReference type="IntAct" id="O26057">
    <property type="interactions" value="3"/>
</dbReference>
<dbReference type="MINT" id="O26057"/>
<dbReference type="STRING" id="85962.HP_1529"/>
<dbReference type="PaxDb" id="85962-C694_07920"/>
<dbReference type="EnsemblBacteria" id="AAD08568">
    <property type="protein sequence ID" value="AAD08568"/>
    <property type="gene ID" value="HP_1529"/>
</dbReference>
<dbReference type="KEGG" id="heo:C694_07920"/>
<dbReference type="KEGG" id="hpy:HP_1529"/>
<dbReference type="PATRIC" id="fig|85962.47.peg.1644"/>
<dbReference type="eggNOG" id="COG0593">
    <property type="taxonomic scope" value="Bacteria"/>
</dbReference>
<dbReference type="InParanoid" id="O26057"/>
<dbReference type="OrthoDB" id="9807019at2"/>
<dbReference type="PhylomeDB" id="O26057"/>
<dbReference type="EvolutionaryTrace" id="O26057"/>
<dbReference type="Proteomes" id="UP000000429">
    <property type="component" value="Chromosome"/>
</dbReference>
<dbReference type="GO" id="GO:0005737">
    <property type="term" value="C:cytoplasm"/>
    <property type="evidence" value="ECO:0007669"/>
    <property type="project" value="UniProtKB-SubCell"/>
</dbReference>
<dbReference type="GO" id="GO:0005886">
    <property type="term" value="C:plasma membrane"/>
    <property type="evidence" value="ECO:0000318"/>
    <property type="project" value="GO_Central"/>
</dbReference>
<dbReference type="GO" id="GO:0005524">
    <property type="term" value="F:ATP binding"/>
    <property type="evidence" value="ECO:0007669"/>
    <property type="project" value="UniProtKB-UniRule"/>
</dbReference>
<dbReference type="GO" id="GO:0016887">
    <property type="term" value="F:ATP hydrolysis activity"/>
    <property type="evidence" value="ECO:0007669"/>
    <property type="project" value="InterPro"/>
</dbReference>
<dbReference type="GO" id="GO:0003688">
    <property type="term" value="F:DNA replication origin binding"/>
    <property type="evidence" value="ECO:0000318"/>
    <property type="project" value="GO_Central"/>
</dbReference>
<dbReference type="GO" id="GO:0008289">
    <property type="term" value="F:lipid binding"/>
    <property type="evidence" value="ECO:0007669"/>
    <property type="project" value="UniProtKB-KW"/>
</dbReference>
<dbReference type="GO" id="GO:0006260">
    <property type="term" value="P:DNA replication"/>
    <property type="evidence" value="ECO:0000318"/>
    <property type="project" value="GO_Central"/>
</dbReference>
<dbReference type="GO" id="GO:0006270">
    <property type="term" value="P:DNA replication initiation"/>
    <property type="evidence" value="ECO:0000318"/>
    <property type="project" value="GO_Central"/>
</dbReference>
<dbReference type="GO" id="GO:0006275">
    <property type="term" value="P:regulation of DNA replication"/>
    <property type="evidence" value="ECO:0007669"/>
    <property type="project" value="UniProtKB-UniRule"/>
</dbReference>
<dbReference type="CDD" id="cd00009">
    <property type="entry name" value="AAA"/>
    <property type="match status" value="1"/>
</dbReference>
<dbReference type="CDD" id="cd06571">
    <property type="entry name" value="Bac_DnaA_C"/>
    <property type="match status" value="1"/>
</dbReference>
<dbReference type="FunFam" id="1.10.1750.10:FF:000007">
    <property type="entry name" value="Chromosomal replication initiator protein DnaA"/>
    <property type="match status" value="1"/>
</dbReference>
<dbReference type="FunFam" id="3.30.300.180:FF:000011">
    <property type="entry name" value="Chromosomal replication initiator protein DnaA"/>
    <property type="match status" value="1"/>
</dbReference>
<dbReference type="FunFam" id="3.40.50.300:FF:002820">
    <property type="entry name" value="Chromosomal replication initiator protein DnaA"/>
    <property type="match status" value="1"/>
</dbReference>
<dbReference type="Gene3D" id="1.10.1750.10">
    <property type="match status" value="1"/>
</dbReference>
<dbReference type="Gene3D" id="1.10.8.60">
    <property type="match status" value="1"/>
</dbReference>
<dbReference type="Gene3D" id="3.30.300.180">
    <property type="match status" value="1"/>
</dbReference>
<dbReference type="Gene3D" id="3.40.50.300">
    <property type="entry name" value="P-loop containing nucleotide triphosphate hydrolases"/>
    <property type="match status" value="1"/>
</dbReference>
<dbReference type="HAMAP" id="MF_00377">
    <property type="entry name" value="DnaA_bact"/>
    <property type="match status" value="1"/>
</dbReference>
<dbReference type="InterPro" id="IPR003593">
    <property type="entry name" value="AAA+_ATPase"/>
</dbReference>
<dbReference type="InterPro" id="IPR001957">
    <property type="entry name" value="Chromosome_initiator_DnaA"/>
</dbReference>
<dbReference type="InterPro" id="IPR020591">
    <property type="entry name" value="Chromosome_initiator_DnaA-like"/>
</dbReference>
<dbReference type="InterPro" id="IPR018312">
    <property type="entry name" value="Chromosome_initiator_DnaA_CS"/>
</dbReference>
<dbReference type="InterPro" id="IPR013159">
    <property type="entry name" value="DnaA_C"/>
</dbReference>
<dbReference type="InterPro" id="IPR013317">
    <property type="entry name" value="DnaA_dom"/>
</dbReference>
<dbReference type="InterPro" id="IPR038454">
    <property type="entry name" value="DnaA_N_sf"/>
</dbReference>
<dbReference type="InterPro" id="IPR027417">
    <property type="entry name" value="P-loop_NTPase"/>
</dbReference>
<dbReference type="InterPro" id="IPR010921">
    <property type="entry name" value="Trp_repressor/repl_initiator"/>
</dbReference>
<dbReference type="NCBIfam" id="TIGR00362">
    <property type="entry name" value="DnaA"/>
    <property type="match status" value="1"/>
</dbReference>
<dbReference type="PANTHER" id="PTHR30050">
    <property type="entry name" value="CHROMOSOMAL REPLICATION INITIATOR PROTEIN DNAA"/>
    <property type="match status" value="1"/>
</dbReference>
<dbReference type="PANTHER" id="PTHR30050:SF2">
    <property type="entry name" value="CHROMOSOMAL REPLICATION INITIATOR PROTEIN DNAA"/>
    <property type="match status" value="1"/>
</dbReference>
<dbReference type="Pfam" id="PF00308">
    <property type="entry name" value="Bac_DnaA"/>
    <property type="match status" value="1"/>
</dbReference>
<dbReference type="Pfam" id="PF08299">
    <property type="entry name" value="Bac_DnaA_C"/>
    <property type="match status" value="1"/>
</dbReference>
<dbReference type="PRINTS" id="PR00051">
    <property type="entry name" value="DNAA"/>
</dbReference>
<dbReference type="SMART" id="SM00382">
    <property type="entry name" value="AAA"/>
    <property type="match status" value="1"/>
</dbReference>
<dbReference type="SMART" id="SM00760">
    <property type="entry name" value="Bac_DnaA_C"/>
    <property type="match status" value="1"/>
</dbReference>
<dbReference type="SUPFAM" id="SSF52540">
    <property type="entry name" value="P-loop containing nucleoside triphosphate hydrolases"/>
    <property type="match status" value="1"/>
</dbReference>
<dbReference type="SUPFAM" id="SSF48295">
    <property type="entry name" value="TrpR-like"/>
    <property type="match status" value="1"/>
</dbReference>
<dbReference type="PROSITE" id="PS01008">
    <property type="entry name" value="DNAA"/>
    <property type="match status" value="1"/>
</dbReference>
<accession>O26057</accession>